<evidence type="ECO:0000255" key="1">
    <source>
        <dbReference type="HAMAP-Rule" id="MF_00098"/>
    </source>
</evidence>
<evidence type="ECO:0000256" key="2">
    <source>
        <dbReference type="SAM" id="MobiDB-lite"/>
    </source>
</evidence>
<evidence type="ECO:0000305" key="3"/>
<sequence>MEIRMSKSSSKPVLVTCGLPYANGKAHIGHLRTYVPADIYARSLKKEGREVTFVCGSDTHGTPIVVNAEELGITPTELVEIYHKHFDETFKQLGIYFDAFGTTDDPENHNRTHDIVSRLIEKGYVYPKIIEIAYCPACNRFLPDRYVEGACPHCGETARGDECDQGCGKHLEPGELQNPVCTICGGPAEYRQQEHFFFKLSEFSNYLMDYLSKDLGGTTNAINYARGWVKQGLTDWCITRNLEWGVKFPGHEDLVVYVWVDAPIGYIAFTEEWAAQAGDSWEKFWKGDGEIVHFIGGDITYHHCIFWPAMLKGADYSVPTAVVASGMVKIEDRKFSKTRGYVVWVGEDYLDHGFHPDLLRYYLASYTSHTKELNFSWRVLQEKINAELVAVLGNFLYRTMLFAFKNYGEVPEGEVEPEIRKEIEKALVEVKAAMEEYEFKKAVDSAMALASFGNTYFQSHEPWKLIKEDRDACGQVVYNCLHLAKALSLIFEPVIPQTMEKAWKGLGHESDIHAALYEETLVPLKAGTKLAKPEILFTKLEDDRIGEMEEIANQRVAAANAKRNGVKGGEKEPSKSEGMGPSEASKASEKTVDVATAEEKVQVETLPVIDYEDFAKLDIRVGKVLLVEPVKKSKKLLRIEVDIGEEKPRQLVAGMASYYTPEELVGKSVIVLANLKPAKLCGVESNGMMLAADDGGAIVAALMPDKEIKSGSRIR</sequence>
<protein>
    <recommendedName>
        <fullName evidence="1">Methionine--tRNA ligase</fullName>
        <ecNumber evidence="1">6.1.1.10</ecNumber>
    </recommendedName>
    <alternativeName>
        <fullName evidence="1">Methionyl-tRNA synthetase</fullName>
        <shortName evidence="1">MetRS</shortName>
    </alternativeName>
</protein>
<comment type="function">
    <text evidence="1">Is required not only for elongation of protein synthesis but also for the initiation of all mRNA translation through initiator tRNA(fMet) aminoacylation.</text>
</comment>
<comment type="catalytic activity">
    <reaction evidence="1">
        <text>tRNA(Met) + L-methionine + ATP = L-methionyl-tRNA(Met) + AMP + diphosphate</text>
        <dbReference type="Rhea" id="RHEA:13481"/>
        <dbReference type="Rhea" id="RHEA-COMP:9667"/>
        <dbReference type="Rhea" id="RHEA-COMP:9698"/>
        <dbReference type="ChEBI" id="CHEBI:30616"/>
        <dbReference type="ChEBI" id="CHEBI:33019"/>
        <dbReference type="ChEBI" id="CHEBI:57844"/>
        <dbReference type="ChEBI" id="CHEBI:78442"/>
        <dbReference type="ChEBI" id="CHEBI:78530"/>
        <dbReference type="ChEBI" id="CHEBI:456215"/>
        <dbReference type="EC" id="6.1.1.10"/>
    </reaction>
</comment>
<comment type="cofactor">
    <cofactor evidence="1">
        <name>Zn(2+)</name>
        <dbReference type="ChEBI" id="CHEBI:29105"/>
    </cofactor>
    <text evidence="1">Binds 1 zinc ion per subunit.</text>
</comment>
<comment type="subunit">
    <text evidence="1">Homodimer.</text>
</comment>
<comment type="subcellular location">
    <subcellularLocation>
        <location evidence="1">Cytoplasm</location>
    </subcellularLocation>
</comment>
<comment type="similarity">
    <text evidence="1">Belongs to the class-I aminoacyl-tRNA synthetase family. MetG type 1 subfamily.</text>
</comment>
<comment type="sequence caution" evidence="3">
    <conflict type="erroneous initiation">
        <sequence resource="EMBL-CDS" id="AAM30563"/>
    </conflict>
</comment>
<accession>Q8PYJ4</accession>
<organism>
    <name type="scientific">Methanosarcina mazei (strain ATCC BAA-159 / DSM 3647 / Goe1 / Go1 / JCM 11833 / OCM 88)</name>
    <name type="common">Methanosarcina frisia</name>
    <dbReference type="NCBI Taxonomy" id="192952"/>
    <lineage>
        <taxon>Archaea</taxon>
        <taxon>Methanobacteriati</taxon>
        <taxon>Methanobacteriota</taxon>
        <taxon>Stenosarchaea group</taxon>
        <taxon>Methanomicrobia</taxon>
        <taxon>Methanosarcinales</taxon>
        <taxon>Methanosarcinaceae</taxon>
        <taxon>Methanosarcina</taxon>
    </lineage>
</organism>
<reference key="1">
    <citation type="journal article" date="2002" name="J. Mol. Microbiol. Biotechnol.">
        <title>The genome of Methanosarcina mazei: evidence for lateral gene transfer between Bacteria and Archaea.</title>
        <authorList>
            <person name="Deppenmeier U."/>
            <person name="Johann A."/>
            <person name="Hartsch T."/>
            <person name="Merkl R."/>
            <person name="Schmitz R.A."/>
            <person name="Martinez-Arias R."/>
            <person name="Henne A."/>
            <person name="Wiezer A."/>
            <person name="Baeumer S."/>
            <person name="Jacobi C."/>
            <person name="Brueggemann H."/>
            <person name="Lienard T."/>
            <person name="Christmann A."/>
            <person name="Boemecke M."/>
            <person name="Steckel S."/>
            <person name="Bhattacharyya A."/>
            <person name="Lykidis A."/>
            <person name="Overbeek R."/>
            <person name="Klenk H.-P."/>
            <person name="Gunsalus R.P."/>
            <person name="Fritz H.-J."/>
            <person name="Gottschalk G."/>
        </authorList>
    </citation>
    <scope>NUCLEOTIDE SEQUENCE [LARGE SCALE GENOMIC DNA]</scope>
    <source>
        <strain>ATCC BAA-159 / DSM 3647 / Goe1 / Go1 / JCM 11833 / OCM 88</strain>
    </source>
</reference>
<feature type="chain" id="PRO_0000139189" description="Methionine--tRNA ligase">
    <location>
        <begin position="1"/>
        <end position="715"/>
    </location>
</feature>
<feature type="domain" description="tRNA-binding" evidence="1">
    <location>
        <begin position="613"/>
        <end position="715"/>
    </location>
</feature>
<feature type="region of interest" description="Disordered" evidence="2">
    <location>
        <begin position="559"/>
        <end position="593"/>
    </location>
</feature>
<feature type="short sequence motif" description="'HIGH' region">
    <location>
        <begin position="20"/>
        <end position="30"/>
    </location>
</feature>
<feature type="short sequence motif" description="'KMSKS' region">
    <location>
        <begin position="334"/>
        <end position="338"/>
    </location>
</feature>
<feature type="binding site" evidence="1">
    <location>
        <position position="151"/>
    </location>
    <ligand>
        <name>Zn(2+)</name>
        <dbReference type="ChEBI" id="CHEBI:29105"/>
    </ligand>
</feature>
<feature type="binding site" evidence="1">
    <location>
        <position position="154"/>
    </location>
    <ligand>
        <name>Zn(2+)</name>
        <dbReference type="ChEBI" id="CHEBI:29105"/>
    </ligand>
</feature>
<feature type="binding site" evidence="1">
    <location>
        <position position="163"/>
    </location>
    <ligand>
        <name>Zn(2+)</name>
        <dbReference type="ChEBI" id="CHEBI:29105"/>
    </ligand>
</feature>
<feature type="binding site" evidence="1">
    <location>
        <position position="167"/>
    </location>
    <ligand>
        <name>Zn(2+)</name>
        <dbReference type="ChEBI" id="CHEBI:29105"/>
    </ligand>
</feature>
<feature type="binding site" evidence="1">
    <location>
        <position position="337"/>
    </location>
    <ligand>
        <name>ATP</name>
        <dbReference type="ChEBI" id="CHEBI:30616"/>
    </ligand>
</feature>
<proteinExistence type="inferred from homology"/>
<gene>
    <name evidence="1" type="primary">metG</name>
    <name type="ordered locus">MM_0867</name>
</gene>
<dbReference type="EC" id="6.1.1.10" evidence="1"/>
<dbReference type="EMBL" id="AE008384">
    <property type="protein sequence ID" value="AAM30563.1"/>
    <property type="status" value="ALT_INIT"/>
    <property type="molecule type" value="Genomic_DNA"/>
</dbReference>
<dbReference type="SMR" id="Q8PYJ4"/>
<dbReference type="KEGG" id="mma:MM_0867"/>
<dbReference type="PATRIC" id="fig|192952.21.peg.1026"/>
<dbReference type="eggNOG" id="arCOG00810">
    <property type="taxonomic scope" value="Archaea"/>
</dbReference>
<dbReference type="HOGENOM" id="CLU_009710_1_2_2"/>
<dbReference type="Proteomes" id="UP000000595">
    <property type="component" value="Chromosome"/>
</dbReference>
<dbReference type="GO" id="GO:0017101">
    <property type="term" value="C:aminoacyl-tRNA synthetase multienzyme complex"/>
    <property type="evidence" value="ECO:0007669"/>
    <property type="project" value="TreeGrafter"/>
</dbReference>
<dbReference type="GO" id="GO:0005829">
    <property type="term" value="C:cytosol"/>
    <property type="evidence" value="ECO:0007669"/>
    <property type="project" value="TreeGrafter"/>
</dbReference>
<dbReference type="GO" id="GO:0005524">
    <property type="term" value="F:ATP binding"/>
    <property type="evidence" value="ECO:0007669"/>
    <property type="project" value="UniProtKB-UniRule"/>
</dbReference>
<dbReference type="GO" id="GO:0046872">
    <property type="term" value="F:metal ion binding"/>
    <property type="evidence" value="ECO:0007669"/>
    <property type="project" value="UniProtKB-KW"/>
</dbReference>
<dbReference type="GO" id="GO:0004825">
    <property type="term" value="F:methionine-tRNA ligase activity"/>
    <property type="evidence" value="ECO:0007669"/>
    <property type="project" value="UniProtKB-UniRule"/>
</dbReference>
<dbReference type="GO" id="GO:0000049">
    <property type="term" value="F:tRNA binding"/>
    <property type="evidence" value="ECO:0007669"/>
    <property type="project" value="UniProtKB-KW"/>
</dbReference>
<dbReference type="GO" id="GO:0006431">
    <property type="term" value="P:methionyl-tRNA aminoacylation"/>
    <property type="evidence" value="ECO:0007669"/>
    <property type="project" value="UniProtKB-UniRule"/>
</dbReference>
<dbReference type="CDD" id="cd07957">
    <property type="entry name" value="Anticodon_Ia_Met"/>
    <property type="match status" value="1"/>
</dbReference>
<dbReference type="CDD" id="cd00814">
    <property type="entry name" value="MetRS_core"/>
    <property type="match status" value="1"/>
</dbReference>
<dbReference type="CDD" id="cd02800">
    <property type="entry name" value="tRNA_bind_EcMetRS_like"/>
    <property type="match status" value="1"/>
</dbReference>
<dbReference type="FunFam" id="2.20.28.20:FF:000001">
    <property type="entry name" value="Methionine--tRNA ligase"/>
    <property type="match status" value="1"/>
</dbReference>
<dbReference type="FunFam" id="2.40.50.140:FF:000042">
    <property type="entry name" value="Methionine--tRNA ligase"/>
    <property type="match status" value="1"/>
</dbReference>
<dbReference type="Gene3D" id="3.40.50.620">
    <property type="entry name" value="HUPs"/>
    <property type="match status" value="1"/>
</dbReference>
<dbReference type="Gene3D" id="1.10.730.10">
    <property type="entry name" value="Isoleucyl-tRNA Synthetase, Domain 1"/>
    <property type="match status" value="1"/>
</dbReference>
<dbReference type="Gene3D" id="2.20.28.20">
    <property type="entry name" value="Methionyl-tRNA synthetase, Zn-domain"/>
    <property type="match status" value="1"/>
</dbReference>
<dbReference type="Gene3D" id="2.40.50.140">
    <property type="entry name" value="Nucleic acid-binding proteins"/>
    <property type="match status" value="1"/>
</dbReference>
<dbReference type="HAMAP" id="MF_00098">
    <property type="entry name" value="Met_tRNA_synth_type1"/>
    <property type="match status" value="1"/>
</dbReference>
<dbReference type="InterPro" id="IPR041872">
    <property type="entry name" value="Anticodon_Met"/>
</dbReference>
<dbReference type="InterPro" id="IPR004495">
    <property type="entry name" value="Met-tRNA-synth_bsu_C"/>
</dbReference>
<dbReference type="InterPro" id="IPR023458">
    <property type="entry name" value="Met-tRNA_ligase_1"/>
</dbReference>
<dbReference type="InterPro" id="IPR014758">
    <property type="entry name" value="Met-tRNA_synth"/>
</dbReference>
<dbReference type="InterPro" id="IPR015413">
    <property type="entry name" value="Methionyl/Leucyl_tRNA_Synth"/>
</dbReference>
<dbReference type="InterPro" id="IPR033911">
    <property type="entry name" value="MetRS_core"/>
</dbReference>
<dbReference type="InterPro" id="IPR029038">
    <property type="entry name" value="MetRS_Zn"/>
</dbReference>
<dbReference type="InterPro" id="IPR012340">
    <property type="entry name" value="NA-bd_OB-fold"/>
</dbReference>
<dbReference type="InterPro" id="IPR014729">
    <property type="entry name" value="Rossmann-like_a/b/a_fold"/>
</dbReference>
<dbReference type="InterPro" id="IPR002547">
    <property type="entry name" value="tRNA-bd_dom"/>
</dbReference>
<dbReference type="InterPro" id="IPR009080">
    <property type="entry name" value="tRNAsynth_Ia_anticodon-bd"/>
</dbReference>
<dbReference type="NCBIfam" id="TIGR00398">
    <property type="entry name" value="metG"/>
    <property type="match status" value="1"/>
</dbReference>
<dbReference type="NCBIfam" id="TIGR00399">
    <property type="entry name" value="metG_C_term"/>
    <property type="match status" value="1"/>
</dbReference>
<dbReference type="NCBIfam" id="NF001100">
    <property type="entry name" value="PRK00133.1"/>
    <property type="match status" value="1"/>
</dbReference>
<dbReference type="PANTHER" id="PTHR45765">
    <property type="entry name" value="METHIONINE--TRNA LIGASE"/>
    <property type="match status" value="1"/>
</dbReference>
<dbReference type="PANTHER" id="PTHR45765:SF1">
    <property type="entry name" value="METHIONINE--TRNA LIGASE, CYTOPLASMIC"/>
    <property type="match status" value="1"/>
</dbReference>
<dbReference type="Pfam" id="PF19303">
    <property type="entry name" value="Anticodon_3"/>
    <property type="match status" value="1"/>
</dbReference>
<dbReference type="Pfam" id="PF09334">
    <property type="entry name" value="tRNA-synt_1g"/>
    <property type="match status" value="1"/>
</dbReference>
<dbReference type="Pfam" id="PF01588">
    <property type="entry name" value="tRNA_bind"/>
    <property type="match status" value="1"/>
</dbReference>
<dbReference type="PRINTS" id="PR01041">
    <property type="entry name" value="TRNASYNTHMET"/>
</dbReference>
<dbReference type="SUPFAM" id="SSF47323">
    <property type="entry name" value="Anticodon-binding domain of a subclass of class I aminoacyl-tRNA synthetases"/>
    <property type="match status" value="1"/>
</dbReference>
<dbReference type="SUPFAM" id="SSF57770">
    <property type="entry name" value="Methionyl-tRNA synthetase (MetRS), Zn-domain"/>
    <property type="match status" value="1"/>
</dbReference>
<dbReference type="SUPFAM" id="SSF50249">
    <property type="entry name" value="Nucleic acid-binding proteins"/>
    <property type="match status" value="1"/>
</dbReference>
<dbReference type="SUPFAM" id="SSF52374">
    <property type="entry name" value="Nucleotidylyl transferase"/>
    <property type="match status" value="1"/>
</dbReference>
<dbReference type="PROSITE" id="PS50886">
    <property type="entry name" value="TRBD"/>
    <property type="match status" value="1"/>
</dbReference>
<keyword id="KW-0030">Aminoacyl-tRNA synthetase</keyword>
<keyword id="KW-0067">ATP-binding</keyword>
<keyword id="KW-0963">Cytoplasm</keyword>
<keyword id="KW-0436">Ligase</keyword>
<keyword id="KW-0479">Metal-binding</keyword>
<keyword id="KW-0547">Nucleotide-binding</keyword>
<keyword id="KW-0648">Protein biosynthesis</keyword>
<keyword id="KW-0694">RNA-binding</keyword>
<keyword id="KW-0820">tRNA-binding</keyword>
<keyword id="KW-0862">Zinc</keyword>
<name>SYM_METMA</name>